<evidence type="ECO:0000250" key="1">
    <source>
        <dbReference type="UniProtKB" id="D3ZSP7"/>
    </source>
</evidence>
<evidence type="ECO:0000250" key="2">
    <source>
        <dbReference type="UniProtKB" id="P53804"/>
    </source>
</evidence>
<evidence type="ECO:0000255" key="3">
    <source>
        <dbReference type="PROSITE-ProRule" id="PRU00175"/>
    </source>
</evidence>
<evidence type="ECO:0000256" key="4">
    <source>
        <dbReference type="SAM" id="MobiDB-lite"/>
    </source>
</evidence>
<evidence type="ECO:0000303" key="5">
    <source>
    </source>
</evidence>
<evidence type="ECO:0000303" key="6">
    <source>
    </source>
</evidence>
<evidence type="ECO:0000305" key="7"/>
<evidence type="ECO:0007744" key="8">
    <source>
    </source>
</evidence>
<feature type="chain" id="PRO_0000392034" description="E3 ubiquitin-protein ligase TTC3">
    <location>
        <begin position="1"/>
        <end position="1979"/>
    </location>
</feature>
<feature type="repeat" description="TPR 1">
    <location>
        <begin position="231"/>
        <end position="264"/>
    </location>
</feature>
<feature type="repeat" description="TPR 2">
    <location>
        <begin position="266"/>
        <end position="298"/>
    </location>
</feature>
<feature type="repeat" description="TPR 3">
    <location>
        <begin position="536"/>
        <end position="572"/>
    </location>
</feature>
<feature type="repeat" description="TPR 4">
    <location>
        <begin position="576"/>
        <end position="609"/>
    </location>
</feature>
<feature type="zinc finger region" description="RING-type; atypical" evidence="3">
    <location>
        <begin position="1931"/>
        <end position="1971"/>
    </location>
</feature>
<feature type="region of interest" description="Interaction with POLG" evidence="2">
    <location>
        <begin position="1"/>
        <end position="230"/>
    </location>
</feature>
<feature type="region of interest" description="Disordered" evidence="4">
    <location>
        <begin position="422"/>
        <end position="457"/>
    </location>
</feature>
<feature type="region of interest" description="Disordered" evidence="4">
    <location>
        <begin position="783"/>
        <end position="811"/>
    </location>
</feature>
<feature type="region of interest" description="Disordered" evidence="4">
    <location>
        <begin position="1021"/>
        <end position="1067"/>
    </location>
</feature>
<feature type="region of interest" description="Disordered" evidence="4">
    <location>
        <begin position="1214"/>
        <end position="1289"/>
    </location>
</feature>
<feature type="region of interest" description="Disordered" evidence="4">
    <location>
        <begin position="1402"/>
        <end position="1427"/>
    </location>
</feature>
<feature type="region of interest" description="Disordered" evidence="4">
    <location>
        <begin position="1574"/>
        <end position="1601"/>
    </location>
</feature>
<feature type="region of interest" description="Disordered" evidence="4">
    <location>
        <begin position="1757"/>
        <end position="1776"/>
    </location>
</feature>
<feature type="region of interest" description="Disordered" evidence="4">
    <location>
        <begin position="1788"/>
        <end position="1821"/>
    </location>
</feature>
<feature type="region of interest" description="Disordered" evidence="4">
    <location>
        <begin position="1873"/>
        <end position="1927"/>
    </location>
</feature>
<feature type="compositionally biased region" description="Low complexity" evidence="4">
    <location>
        <begin position="1036"/>
        <end position="1050"/>
    </location>
</feature>
<feature type="compositionally biased region" description="Basic and acidic residues" evidence="4">
    <location>
        <begin position="1214"/>
        <end position="1227"/>
    </location>
</feature>
<feature type="compositionally biased region" description="Low complexity" evidence="4">
    <location>
        <begin position="1248"/>
        <end position="1257"/>
    </location>
</feature>
<feature type="compositionally biased region" description="Basic and acidic residues" evidence="4">
    <location>
        <begin position="1576"/>
        <end position="1586"/>
    </location>
</feature>
<feature type="compositionally biased region" description="Polar residues" evidence="4">
    <location>
        <begin position="1788"/>
        <end position="1799"/>
    </location>
</feature>
<feature type="compositionally biased region" description="Polar residues" evidence="4">
    <location>
        <begin position="1808"/>
        <end position="1821"/>
    </location>
</feature>
<feature type="compositionally biased region" description="Basic and acidic residues" evidence="4">
    <location>
        <begin position="1873"/>
        <end position="1890"/>
    </location>
</feature>
<feature type="modified residue" description="Phosphoserine" evidence="2">
    <location>
        <position position="378"/>
    </location>
</feature>
<feature type="modified residue" description="Phosphoserine" evidence="8">
    <location>
        <position position="1009"/>
    </location>
</feature>
<feature type="modified residue" description="Phosphoserine" evidence="8">
    <location>
        <position position="1060"/>
    </location>
</feature>
<feature type="modified residue" description="Phosphoserine" evidence="8">
    <location>
        <position position="1794"/>
    </location>
</feature>
<feature type="splice variant" id="VSP_038774" description="In isoform 5." evidence="6">
    <location>
        <begin position="1"/>
        <end position="401"/>
    </location>
</feature>
<feature type="splice variant" id="VSP_038775" description="In isoform 3 and isoform 4." evidence="5 6">
    <location>
        <begin position="143"/>
        <end position="160"/>
    </location>
</feature>
<feature type="splice variant" id="VSP_038776" description="In isoform 2 and isoform 4." evidence="5 6">
    <location>
        <position position="1056"/>
    </location>
</feature>
<feature type="splice variant" id="VSP_038777" description="In isoform 4." evidence="6">
    <location>
        <begin position="1089"/>
        <end position="1110"/>
    </location>
</feature>
<feature type="splice variant" id="VSP_038778" description="In isoform 6." evidence="6">
    <location>
        <position position="1593"/>
    </location>
</feature>
<feature type="sequence conflict" description="In Ref. 1; BAA31563." evidence="7" ref="1">
    <original>L</original>
    <variation>P</variation>
    <location>
        <position position="94"/>
    </location>
</feature>
<feature type="sequence conflict" description="In Ref. 1; BAC35513/BAE38412." evidence="7" ref="1">
    <original>F</original>
    <variation>S</variation>
    <location>
        <position position="454"/>
    </location>
</feature>
<feature type="sequence conflict" description="In Ref. 1; BAE37809." evidence="7" ref="1">
    <original>I</original>
    <variation>F</variation>
    <location>
        <position position="1164"/>
    </location>
</feature>
<feature type="sequence conflict" description="In Ref. 1; BAC40250." evidence="7" ref="1">
    <original>L</original>
    <variation>P</variation>
    <location>
        <position position="1177"/>
    </location>
</feature>
<feature type="sequence conflict" description="In Ref. 1; BAE36675." evidence="7" ref="1">
    <original>N</original>
    <variation>S</variation>
    <location>
        <position position="1522"/>
    </location>
</feature>
<feature type="sequence conflict" description="In Ref. 1; BAE36675/BAE37630/BAE37809." evidence="7" ref="1">
    <original>S</original>
    <variation>P</variation>
    <location>
        <position position="1571"/>
    </location>
</feature>
<feature type="sequence conflict" description="In Ref. 1; BAE36675/BAE37630/BAE37809." evidence="7" ref="1">
    <original>A</original>
    <variation>V</variation>
    <location>
        <position position="1603"/>
    </location>
</feature>
<feature type="sequence conflict" description="In Ref. 1; BAE36675." evidence="7" ref="1">
    <original>N</original>
    <variation>S</variation>
    <location>
        <position position="1822"/>
    </location>
</feature>
<feature type="sequence conflict" description="In Ref. 1; BAE36675." evidence="7" ref="1">
    <original>V</original>
    <variation>F</variation>
    <location>
        <position position="1847"/>
    </location>
</feature>
<dbReference type="EC" id="2.3.2.27" evidence="2"/>
<dbReference type="EMBL" id="AB008516">
    <property type="protein sequence ID" value="BAA31563.1"/>
    <property type="molecule type" value="mRNA"/>
</dbReference>
<dbReference type="EMBL" id="AK053765">
    <property type="protein sequence ID" value="BAC35513.1"/>
    <property type="status" value="ALT_INIT"/>
    <property type="molecule type" value="mRNA"/>
</dbReference>
<dbReference type="EMBL" id="AK088273">
    <property type="protein sequence ID" value="BAC40250.1"/>
    <property type="molecule type" value="mRNA"/>
</dbReference>
<dbReference type="EMBL" id="AK162004">
    <property type="protein sequence ID" value="BAE36675.1"/>
    <property type="molecule type" value="mRNA"/>
</dbReference>
<dbReference type="EMBL" id="AK163496">
    <property type="protein sequence ID" value="BAE37372.1"/>
    <property type="molecule type" value="mRNA"/>
</dbReference>
<dbReference type="EMBL" id="AK164106">
    <property type="protein sequence ID" value="BAE37630.1"/>
    <property type="molecule type" value="mRNA"/>
</dbReference>
<dbReference type="EMBL" id="AK164492">
    <property type="protein sequence ID" value="BAE37809.1"/>
    <property type="molecule type" value="mRNA"/>
</dbReference>
<dbReference type="EMBL" id="AK165850">
    <property type="protein sequence ID" value="BAE38412.1"/>
    <property type="molecule type" value="mRNA"/>
</dbReference>
<dbReference type="EMBL" id="AK148494">
    <property type="protein sequence ID" value="BAE28586.1"/>
    <property type="status" value="ALT_INIT"/>
    <property type="molecule type" value="mRNA"/>
</dbReference>
<dbReference type="EMBL" id="AK220495">
    <property type="protein sequence ID" value="BAD90293.1"/>
    <property type="status" value="ALT_INIT"/>
    <property type="molecule type" value="mRNA"/>
</dbReference>
<dbReference type="EMBL" id="BC019173">
    <property type="protein sequence ID" value="AAH19173.1"/>
    <property type="status" value="ALT_SEQ"/>
    <property type="molecule type" value="mRNA"/>
</dbReference>
<dbReference type="EMBL" id="BC057207">
    <property type="protein sequence ID" value="AAH57207.1"/>
    <property type="status" value="ALT_SEQ"/>
    <property type="molecule type" value="mRNA"/>
</dbReference>
<dbReference type="CCDS" id="CCDS37407.1">
    <molecule id="O88196-1"/>
</dbReference>
<dbReference type="PIR" id="JW0059">
    <property type="entry name" value="JW0059"/>
</dbReference>
<dbReference type="SMR" id="O88196"/>
<dbReference type="FunCoup" id="O88196">
    <property type="interactions" value="3090"/>
</dbReference>
<dbReference type="IntAct" id="O88196">
    <property type="interactions" value="4"/>
</dbReference>
<dbReference type="MINT" id="O88196"/>
<dbReference type="STRING" id="10090.ENSMUSP00000156151"/>
<dbReference type="GlyConnect" id="2272">
    <property type="glycosylation" value="1 N-Linked glycan (1 site)"/>
</dbReference>
<dbReference type="GlyCosmos" id="O88196">
    <property type="glycosylation" value="1 site, 1 glycan"/>
</dbReference>
<dbReference type="GlyGen" id="O88196">
    <property type="glycosylation" value="4 sites, 4 N-linked glycans (3 sites)"/>
</dbReference>
<dbReference type="iPTMnet" id="O88196"/>
<dbReference type="PhosphoSitePlus" id="O88196"/>
<dbReference type="jPOST" id="O88196"/>
<dbReference type="PaxDb" id="10090-ENSMUSP00000112801"/>
<dbReference type="PeptideAtlas" id="O88196"/>
<dbReference type="ProteomicsDB" id="300150">
    <molecule id="O88196-1"/>
</dbReference>
<dbReference type="ProteomicsDB" id="300151">
    <molecule id="O88196-2"/>
</dbReference>
<dbReference type="ProteomicsDB" id="300152">
    <molecule id="O88196-3"/>
</dbReference>
<dbReference type="ProteomicsDB" id="300153">
    <molecule id="O88196-4"/>
</dbReference>
<dbReference type="ProteomicsDB" id="300154">
    <molecule id="O88196-5"/>
</dbReference>
<dbReference type="ProteomicsDB" id="300155">
    <molecule id="O88196-6"/>
</dbReference>
<dbReference type="Pumba" id="O88196"/>
<dbReference type="UCSC" id="uc008aau.1">
    <molecule id="O88196-2"/>
    <property type="organism name" value="mouse"/>
</dbReference>
<dbReference type="UCSC" id="uc008aaw.1">
    <molecule id="O88196-3"/>
    <property type="organism name" value="mouse"/>
</dbReference>
<dbReference type="UCSC" id="uc008aax.1">
    <molecule id="O88196-4"/>
    <property type="organism name" value="mouse"/>
</dbReference>
<dbReference type="UCSC" id="uc012aiu.1">
    <molecule id="O88196-1"/>
    <property type="organism name" value="mouse"/>
</dbReference>
<dbReference type="AGR" id="MGI:1276539"/>
<dbReference type="MGI" id="MGI:1276539">
    <property type="gene designation" value="Ttc3"/>
</dbReference>
<dbReference type="eggNOG" id="KOG0800">
    <property type="taxonomic scope" value="Eukaryota"/>
</dbReference>
<dbReference type="InParanoid" id="O88196"/>
<dbReference type="PhylomeDB" id="O88196"/>
<dbReference type="UniPathway" id="UPA00143"/>
<dbReference type="ChiTaRS" id="Ttc3">
    <property type="organism name" value="mouse"/>
</dbReference>
<dbReference type="PRO" id="PR:O88196"/>
<dbReference type="Proteomes" id="UP000000589">
    <property type="component" value="Unplaced"/>
</dbReference>
<dbReference type="RNAct" id="O88196">
    <property type="molecule type" value="protein"/>
</dbReference>
<dbReference type="GO" id="GO:0005794">
    <property type="term" value="C:Golgi apparatus"/>
    <property type="evidence" value="ECO:0007669"/>
    <property type="project" value="UniProtKB-SubCell"/>
</dbReference>
<dbReference type="GO" id="GO:0005634">
    <property type="term" value="C:nucleus"/>
    <property type="evidence" value="ECO:0000250"/>
    <property type="project" value="UniProtKB"/>
</dbReference>
<dbReference type="GO" id="GO:0005773">
    <property type="term" value="C:vacuole"/>
    <property type="evidence" value="ECO:0000314"/>
    <property type="project" value="MGI"/>
</dbReference>
<dbReference type="GO" id="GO:0004842">
    <property type="term" value="F:ubiquitin-protein transferase activity"/>
    <property type="evidence" value="ECO:0000250"/>
    <property type="project" value="UniProtKB"/>
</dbReference>
<dbReference type="GO" id="GO:0008270">
    <property type="term" value="F:zinc ion binding"/>
    <property type="evidence" value="ECO:0007669"/>
    <property type="project" value="UniProtKB-KW"/>
</dbReference>
<dbReference type="GO" id="GO:0030517">
    <property type="term" value="P:negative regulation of axon extension"/>
    <property type="evidence" value="ECO:0000314"/>
    <property type="project" value="MGI"/>
</dbReference>
<dbReference type="GO" id="GO:0045665">
    <property type="term" value="P:negative regulation of neuron differentiation"/>
    <property type="evidence" value="ECO:0000314"/>
    <property type="project" value="MGI"/>
</dbReference>
<dbReference type="GO" id="GO:0070936">
    <property type="term" value="P:protein K48-linked ubiquitination"/>
    <property type="evidence" value="ECO:0000250"/>
    <property type="project" value="UniProtKB"/>
</dbReference>
<dbReference type="GO" id="GO:0006511">
    <property type="term" value="P:ubiquitin-dependent protein catabolic process"/>
    <property type="evidence" value="ECO:0000250"/>
    <property type="project" value="UniProtKB"/>
</dbReference>
<dbReference type="CDD" id="cd16481">
    <property type="entry name" value="RING-H2_TTC3"/>
    <property type="match status" value="1"/>
</dbReference>
<dbReference type="FunFam" id="1.25.40.10:FF:000370">
    <property type="entry name" value="E3 ubiquitin-protein ligase TTC3"/>
    <property type="match status" value="1"/>
</dbReference>
<dbReference type="FunFam" id="1.25.40.10:FF:000143">
    <property type="entry name" value="E3 ubiquitin-protein ligase TTC3 isoform X2"/>
    <property type="match status" value="1"/>
</dbReference>
<dbReference type="FunFam" id="3.30.40.10:FF:000529">
    <property type="entry name" value="Tetratricopeptide repeat domain 3"/>
    <property type="match status" value="1"/>
</dbReference>
<dbReference type="Gene3D" id="1.10.533.10">
    <property type="entry name" value="Death Domain, Fas"/>
    <property type="match status" value="1"/>
</dbReference>
<dbReference type="Gene3D" id="1.25.40.10">
    <property type="entry name" value="Tetratricopeptide repeat domain"/>
    <property type="match status" value="2"/>
</dbReference>
<dbReference type="Gene3D" id="3.30.40.10">
    <property type="entry name" value="Zinc/RING finger domain, C3HC4 (zinc finger)"/>
    <property type="match status" value="1"/>
</dbReference>
<dbReference type="InterPro" id="IPR011029">
    <property type="entry name" value="DEATH-like_dom_sf"/>
</dbReference>
<dbReference type="InterPro" id="IPR011990">
    <property type="entry name" value="TPR-like_helical_dom_sf"/>
</dbReference>
<dbReference type="InterPro" id="IPR019734">
    <property type="entry name" value="TPR_rpt"/>
</dbReference>
<dbReference type="InterPro" id="IPR056872">
    <property type="entry name" value="TTC3/DZIP3-like_helical"/>
</dbReference>
<dbReference type="InterPro" id="IPR056870">
    <property type="entry name" value="TTC3/DZIP3/RBM44-like_helical"/>
</dbReference>
<dbReference type="InterPro" id="IPR043866">
    <property type="entry name" value="TTC3/DZIP3_dom"/>
</dbReference>
<dbReference type="InterPro" id="IPR056871">
    <property type="entry name" value="wHTH_TTC3"/>
</dbReference>
<dbReference type="InterPro" id="IPR001841">
    <property type="entry name" value="Znf_RING"/>
</dbReference>
<dbReference type="InterPro" id="IPR013083">
    <property type="entry name" value="Znf_RING/FYVE/PHD"/>
</dbReference>
<dbReference type="PANTHER" id="PTHR17550">
    <property type="entry name" value="E3 UBIQUITIN-PROTEIN LIGASE TTC3"/>
    <property type="match status" value="1"/>
</dbReference>
<dbReference type="PANTHER" id="PTHR17550:SF4">
    <property type="entry name" value="E3 UBIQUITIN-PROTEIN LIGASE TTC3"/>
    <property type="match status" value="1"/>
</dbReference>
<dbReference type="Pfam" id="PF24525">
    <property type="entry name" value="TTC3"/>
    <property type="match status" value="1"/>
</dbReference>
<dbReference type="Pfam" id="PF24905">
    <property type="entry name" value="TTC3_9th"/>
    <property type="match status" value="1"/>
</dbReference>
<dbReference type="Pfam" id="PF19179">
    <property type="entry name" value="TTC3_DZIP3_dom"/>
    <property type="match status" value="1"/>
</dbReference>
<dbReference type="Pfam" id="PF24812">
    <property type="entry name" value="wHTH_TTC3"/>
    <property type="match status" value="1"/>
</dbReference>
<dbReference type="Pfam" id="PF13639">
    <property type="entry name" value="zf-RING_2"/>
    <property type="match status" value="1"/>
</dbReference>
<dbReference type="SMART" id="SM00184">
    <property type="entry name" value="RING"/>
    <property type="match status" value="1"/>
</dbReference>
<dbReference type="SMART" id="SM00028">
    <property type="entry name" value="TPR"/>
    <property type="match status" value="4"/>
</dbReference>
<dbReference type="SUPFAM" id="SSF57850">
    <property type="entry name" value="RING/U-box"/>
    <property type="match status" value="1"/>
</dbReference>
<dbReference type="SUPFAM" id="SSF48452">
    <property type="entry name" value="TPR-like"/>
    <property type="match status" value="2"/>
</dbReference>
<dbReference type="PROSITE" id="PS50005">
    <property type="entry name" value="TPR"/>
    <property type="match status" value="3"/>
</dbReference>
<dbReference type="PROSITE" id="PS50293">
    <property type="entry name" value="TPR_REGION"/>
    <property type="match status" value="2"/>
</dbReference>
<dbReference type="PROSITE" id="PS50089">
    <property type="entry name" value="ZF_RING_2"/>
    <property type="match status" value="1"/>
</dbReference>
<reference key="1">
    <citation type="journal article" date="1998" name="J. Biochem.">
        <title>Molecular characterization of the mouse mtprd gene, a homologue of human TPRD: unique gene expression suggesting its critical role in the pathophysiology of Down syndrome.</title>
        <authorList>
            <person name="Tsukahara F."/>
            <person name="Urakawa I."/>
            <person name="Hattori M."/>
            <person name="Hirai M."/>
            <person name="Ohba K."/>
            <person name="Yoshioka T."/>
            <person name="Sakaki Y."/>
            <person name="Muraki T."/>
        </authorList>
    </citation>
    <scope>NUCLEOTIDE SEQUENCE [MRNA] (ISOFORM 1)</scope>
</reference>
<reference key="2">
    <citation type="journal article" date="2005" name="Science">
        <title>The transcriptional landscape of the mammalian genome.</title>
        <authorList>
            <person name="Carninci P."/>
            <person name="Kasukawa T."/>
            <person name="Katayama S."/>
            <person name="Gough J."/>
            <person name="Frith M.C."/>
            <person name="Maeda N."/>
            <person name="Oyama R."/>
            <person name="Ravasi T."/>
            <person name="Lenhard B."/>
            <person name="Wells C."/>
            <person name="Kodzius R."/>
            <person name="Shimokawa K."/>
            <person name="Bajic V.B."/>
            <person name="Brenner S.E."/>
            <person name="Batalov S."/>
            <person name="Forrest A.R."/>
            <person name="Zavolan M."/>
            <person name="Davis M.J."/>
            <person name="Wilming L.G."/>
            <person name="Aidinis V."/>
            <person name="Allen J.E."/>
            <person name="Ambesi-Impiombato A."/>
            <person name="Apweiler R."/>
            <person name="Aturaliya R.N."/>
            <person name="Bailey T.L."/>
            <person name="Bansal M."/>
            <person name="Baxter L."/>
            <person name="Beisel K.W."/>
            <person name="Bersano T."/>
            <person name="Bono H."/>
            <person name="Chalk A.M."/>
            <person name="Chiu K.P."/>
            <person name="Choudhary V."/>
            <person name="Christoffels A."/>
            <person name="Clutterbuck D.R."/>
            <person name="Crowe M.L."/>
            <person name="Dalla E."/>
            <person name="Dalrymple B.P."/>
            <person name="de Bono B."/>
            <person name="Della Gatta G."/>
            <person name="di Bernardo D."/>
            <person name="Down T."/>
            <person name="Engstrom P."/>
            <person name="Fagiolini M."/>
            <person name="Faulkner G."/>
            <person name="Fletcher C.F."/>
            <person name="Fukushima T."/>
            <person name="Furuno M."/>
            <person name="Futaki S."/>
            <person name="Gariboldi M."/>
            <person name="Georgii-Hemming P."/>
            <person name="Gingeras T.R."/>
            <person name="Gojobori T."/>
            <person name="Green R.E."/>
            <person name="Gustincich S."/>
            <person name="Harbers M."/>
            <person name="Hayashi Y."/>
            <person name="Hensch T.K."/>
            <person name="Hirokawa N."/>
            <person name="Hill D."/>
            <person name="Huminiecki L."/>
            <person name="Iacono M."/>
            <person name="Ikeo K."/>
            <person name="Iwama A."/>
            <person name="Ishikawa T."/>
            <person name="Jakt M."/>
            <person name="Kanapin A."/>
            <person name="Katoh M."/>
            <person name="Kawasawa Y."/>
            <person name="Kelso J."/>
            <person name="Kitamura H."/>
            <person name="Kitano H."/>
            <person name="Kollias G."/>
            <person name="Krishnan S.P."/>
            <person name="Kruger A."/>
            <person name="Kummerfeld S.K."/>
            <person name="Kurochkin I.V."/>
            <person name="Lareau L.F."/>
            <person name="Lazarevic D."/>
            <person name="Lipovich L."/>
            <person name="Liu J."/>
            <person name="Liuni S."/>
            <person name="McWilliam S."/>
            <person name="Madan Babu M."/>
            <person name="Madera M."/>
            <person name="Marchionni L."/>
            <person name="Matsuda H."/>
            <person name="Matsuzawa S."/>
            <person name="Miki H."/>
            <person name="Mignone F."/>
            <person name="Miyake S."/>
            <person name="Morris K."/>
            <person name="Mottagui-Tabar S."/>
            <person name="Mulder N."/>
            <person name="Nakano N."/>
            <person name="Nakauchi H."/>
            <person name="Ng P."/>
            <person name="Nilsson R."/>
            <person name="Nishiguchi S."/>
            <person name="Nishikawa S."/>
            <person name="Nori F."/>
            <person name="Ohara O."/>
            <person name="Okazaki Y."/>
            <person name="Orlando V."/>
            <person name="Pang K.C."/>
            <person name="Pavan W.J."/>
            <person name="Pavesi G."/>
            <person name="Pesole G."/>
            <person name="Petrovsky N."/>
            <person name="Piazza S."/>
            <person name="Reed J."/>
            <person name="Reid J.F."/>
            <person name="Ring B.Z."/>
            <person name="Ringwald M."/>
            <person name="Rost B."/>
            <person name="Ruan Y."/>
            <person name="Salzberg S.L."/>
            <person name="Sandelin A."/>
            <person name="Schneider C."/>
            <person name="Schoenbach C."/>
            <person name="Sekiguchi K."/>
            <person name="Semple C.A."/>
            <person name="Seno S."/>
            <person name="Sessa L."/>
            <person name="Sheng Y."/>
            <person name="Shibata Y."/>
            <person name="Shimada H."/>
            <person name="Shimada K."/>
            <person name="Silva D."/>
            <person name="Sinclair B."/>
            <person name="Sperling S."/>
            <person name="Stupka E."/>
            <person name="Sugiura K."/>
            <person name="Sultana R."/>
            <person name="Takenaka Y."/>
            <person name="Taki K."/>
            <person name="Tammoja K."/>
            <person name="Tan S.L."/>
            <person name="Tang S."/>
            <person name="Taylor M.S."/>
            <person name="Tegner J."/>
            <person name="Teichmann S.A."/>
            <person name="Ueda H.R."/>
            <person name="van Nimwegen E."/>
            <person name="Verardo R."/>
            <person name="Wei C.L."/>
            <person name="Yagi K."/>
            <person name="Yamanishi H."/>
            <person name="Zabarovsky E."/>
            <person name="Zhu S."/>
            <person name="Zimmer A."/>
            <person name="Hide W."/>
            <person name="Bult C."/>
            <person name="Grimmond S.M."/>
            <person name="Teasdale R.D."/>
            <person name="Liu E.T."/>
            <person name="Brusic V."/>
            <person name="Quackenbush J."/>
            <person name="Wahlestedt C."/>
            <person name="Mattick J.S."/>
            <person name="Hume D.A."/>
            <person name="Kai C."/>
            <person name="Sasaki D."/>
            <person name="Tomaru Y."/>
            <person name="Fukuda S."/>
            <person name="Kanamori-Katayama M."/>
            <person name="Suzuki M."/>
            <person name="Aoki J."/>
            <person name="Arakawa T."/>
            <person name="Iida J."/>
            <person name="Imamura K."/>
            <person name="Itoh M."/>
            <person name="Kato T."/>
            <person name="Kawaji H."/>
            <person name="Kawagashira N."/>
            <person name="Kawashima T."/>
            <person name="Kojima M."/>
            <person name="Kondo S."/>
            <person name="Konno H."/>
            <person name="Nakano K."/>
            <person name="Ninomiya N."/>
            <person name="Nishio T."/>
            <person name="Okada M."/>
            <person name="Plessy C."/>
            <person name="Shibata K."/>
            <person name="Shiraki T."/>
            <person name="Suzuki S."/>
            <person name="Tagami M."/>
            <person name="Waki K."/>
            <person name="Watahiki A."/>
            <person name="Okamura-Oho Y."/>
            <person name="Suzuki H."/>
            <person name="Kawai J."/>
            <person name="Hayashizaki Y."/>
        </authorList>
    </citation>
    <scope>NUCLEOTIDE SEQUENCE [LARGE SCALE MRNA] OF 1-1194 AND 1423-1979 (ISOFORMS 4 AND 5)</scope>
    <scope>NUCLEOTIDE SEQUENCE [LARGE SCALE MRNA] OF 1116-1874 (ISOFORM 6)</scope>
    <source>
        <strain>C57BL/6J</strain>
        <strain>NOD</strain>
        <tissue>Corpora quadrigemina</tissue>
        <tissue>Eye</tissue>
        <tissue>Heart</tissue>
        <tissue>Lung</tissue>
        <tissue>Pancreas</tissue>
        <tissue>Spinal cord</tissue>
        <tissue>Thymus</tissue>
        <tissue>Wolffian duct</tissue>
    </source>
</reference>
<reference key="3">
    <citation type="submission" date="2005-02" db="EMBL/GenBank/DDBJ databases">
        <title>Prediction of the coding sequences of mouse homologues of KIAA gene. The complete nucleotide sequences of mouse KIAA-homologous cDNAs identified by screening of terminal sequences of cDNA clones randomly sampled from size-fractionated libraries.</title>
        <authorList>
            <person name="Okazaki N."/>
            <person name="Kikuno R.F."/>
            <person name="Ohara R."/>
            <person name="Inamoto S."/>
            <person name="Nagase T."/>
            <person name="Ohara O."/>
            <person name="Koga H."/>
        </authorList>
    </citation>
    <scope>NUCLEOTIDE SEQUENCE [LARGE SCALE MRNA] OF 1-1178 (ISOFORM 1)</scope>
    <source>
        <tissue>Fetal brain</tissue>
    </source>
</reference>
<reference key="4">
    <citation type="journal article" date="2004" name="Genome Res.">
        <title>The status, quality, and expansion of the NIH full-length cDNA project: the Mammalian Gene Collection (MGC).</title>
        <authorList>
            <consortium name="The MGC Project Team"/>
        </authorList>
    </citation>
    <scope>NUCLEOTIDE SEQUENCE [LARGE SCALE MRNA] OF 1-1181 (ISOFORMS 2 AND 3)</scope>
    <source>
        <strain>FVB/N-3</strain>
        <strain>NMRI</strain>
        <tissue>Mammary tumor</tissue>
    </source>
</reference>
<reference key="5">
    <citation type="journal article" date="2010" name="Cell">
        <title>A tissue-specific atlas of mouse protein phosphorylation and expression.</title>
        <authorList>
            <person name="Huttlin E.L."/>
            <person name="Jedrychowski M.P."/>
            <person name="Elias J.E."/>
            <person name="Goswami T."/>
            <person name="Rad R."/>
            <person name="Beausoleil S.A."/>
            <person name="Villen J."/>
            <person name="Haas W."/>
            <person name="Sowa M.E."/>
            <person name="Gygi S.P."/>
        </authorList>
    </citation>
    <scope>PHOSPHORYLATION [LARGE SCALE ANALYSIS] AT SER-1009; SER-1060 AND SER-1794</scope>
    <scope>IDENTIFICATION BY MASS SPECTROMETRY [LARGE SCALE ANALYSIS]</scope>
    <source>
        <tissue>Brain</tissue>
        <tissue>Heart</tissue>
        <tissue>Kidney</tissue>
    </source>
</reference>
<name>TTC3_MOUSE</name>
<sequence>MDDFAEGGLSLADDILLEDYPYEDDCICTPDFTTDDYVRVTQLYYEGVGMQYKDYAQSEKNLEYDICNIWCSKPLSILQDYCDAIKLYIFWPLLFQHQHSSIISRLHPCVEAIRSRAAEISLKKLQHLELMEDIVDLAKKVANDSFLIEGLLKIGYKIENKILAMEDALNWIKYTGDVTILPKLGSVDNCWPMLSIFFTEYKYHITRVVTENCNLLEEFRRHSCMQCVKQGELMKMRGNEEFSKEKFEIAVIYYTRAIEYRPENHLLYGNRALCFLRMGQFRNALSDGKRAIVLKNTWPKGHYRYCDALCMLGEYDWALQANIKAQKLCKNDPEGIKDLIQQHVKLQKQIEDLQGRTSNKNPIKAFYESRAYIPRNSSAPAFRTSLNFVETERGFRKTKYKMANGGDQNQKVADEALKGDDCDCHPEFLPPPSQPPRHKGKQKSRNNESEKPSFNSEVSLQVDLKSILEKQFSKSSRAAHQDFANIMKMLRSLIQDGYTALLEQRCRSAAQAFTELLNGLDPQKIKQLNLAMINYVLVVYGLAVSLLGIGRPEELSEAENQFKRIIEHYPNEGLDCLAYCGIGKVYLKKNRFLEALNHFEKAKTLISRLPGILTWPTSNVIIEESKPEKVKVMLEKFVEECKFPPVPDAVCCYQKCRGYSKIQIYLTDPDFKGFIRISCCQYCKVEFHMNCWKKLKTTTFNDKIDKDFLQGICLTPDCEGIISKIIIYSSGGQVKCEFEHKVIKEKVPSRPVLKQKCSSLEKLRLKEDKKLKRKIQKQEAKKLAQERMEEDLRESNPPKNEEPEETSDSAQRCQFLDDRILQCIKQNADKIKSVVLNTSTLLKELLSWKVLSTEDYTTCFSSKNFVHEAVDYVIGHLIQEKNRVKTRIFLHVLSELKELDPKLAPWIQRLNSFGLDAIGPFFTRYGASLKELDFHVVTVLWDEKYGHKLGSIEGKQLDYFFEPASAMEARCLIWLLEEHRDKFPALHSALDEFFDIMDSRCTVLRKQDSDEMPFGCIKVKNKGKKKKPKDSKPMLVGSGAASVAPSSEAVTPEDHSRRNSDSAGPFAVPDHLRQDVEEFEALYDQHSSEYVVRNKKLWDINPKQKCSTLYDYFSQLLEEHGPLDMSDRMFSEEYEFFPEETRQILEKAGGLKSFLLGCPRFVVIDNCIALKKVASRLKKKRKKKNMKAKVEDISKTGEYLRVKLPLNPTAREFQPDVKSEALSEDVKSIPGPADSSTLAAEDLKAQLDSDSSSGSASEDSRLEVASPDSPTPLCEDASPSPTPAPEEAKPTYWAQSHLVTGFCTYLPFQGFGITQRPAYINMVPSLSQFTSIYTPLANISSEYPMQRSMPVVPSFVASNRADENAAAYFESPNLNTEHDSGDHMASETQILEDTLGVCVRSQGSAADADPALSEPEGNSEHSGSSDSLWEASLENVSGTTDAPAAPSVAIQVSRSMVHQEVNTEPYEPFETQQGDLSQKEKECHLLREQLKVACENCEQIELRSSQEIKDLEEKLQRHTEENKISKTELDWFLQDLDREIKKWQQEKKEIQERLKALKKKIKKVINTSEMSAQKNDGFDKECEPHPDQSLGFSSALTDEKTKAEESVRKGKELYEESHQRAVAAEVSVLENWKEREVCKLQGVASQSEAYLKSLKLMSSDSATYPDVEYDILSWESFLSTVREEIESKKSQFEEHIKAIKNGSRLSDLSSVQLSEVSFPGCSTIHPQFLSESSGHEDPGLVACVDSMTGAVLNDPYMDSASGCPEEVPELSLGSPTHQPEVTQQLELKGASQVSPSEQSPEADEKLSGQATRSSQSPKKPSNSIIEHLSVIFPCYTSTELAGFIKKVRNKTKNSFSGLTIEEIVEKVTEHIVDEQKKKKPNPGKDKKTSEAHSAASVAKSSQSPPLAAAGPSARTKGQKKDDVPAPDGNSCEICHEIFKSKNMRVLKCGHKFHKGCFKQWLKGQSTCPTCGSSDLLSEE</sequence>
<comment type="function">
    <text evidence="2">E3 ubiquitin-protein ligase which catalyzes the formation of 'Lys-48'-polyubiquitin chains (By similarity). Mediates the ubiquitination and subsequent degradation of phosphorylated Akt (AKT1, AKT2 and AKT3) in the nucleus (By similarity). Acts as a terminal regulator of Akt signaling after activation; its phosphorylation by Akt, which is a prerequisite for ubiquitin ligase activity, suggests the existence of a regulation mechanism required to control Akt levels after activation (By similarity). Positively regulates TGFB1-induced epithelial-mesenchymal transition and myofibroblast differentiation by mediating the ubiquitination and subsequent degradation of SMURF2 (By similarity). Regulates neuronal differentiation by regulating actin remodeling and Golgi organization via a signaling cascade involving RHOA, CIT and ROCK (By similarity). Inhibits cell proliferation (By similarity).</text>
</comment>
<comment type="catalytic activity">
    <reaction evidence="2">
        <text>S-ubiquitinyl-[E2 ubiquitin-conjugating enzyme]-L-cysteine + [acceptor protein]-L-lysine = [E2 ubiquitin-conjugating enzyme]-L-cysteine + N(6)-ubiquitinyl-[acceptor protein]-L-lysine.</text>
        <dbReference type="EC" id="2.3.2.27"/>
    </reaction>
</comment>
<comment type="pathway">
    <text evidence="2">Protein modification; protein ubiquitination.</text>
</comment>
<comment type="subunit">
    <text evidence="2">Interacts (when phosphorylated on Ser-378) with AKT1, AKT2 and AKT3 (when phosphorylated) (By similarity). Interacts with CIT (By similarity). Interacts with POLG (By similarity). Interacts with HSP70 (By similarity). Interacts with SMURF2 (By similarity).</text>
</comment>
<comment type="subcellular location">
    <subcellularLocation>
        <location evidence="2">Nucleus</location>
    </subcellularLocation>
    <subcellularLocation>
        <location evidence="2">Cytoplasm</location>
    </subcellularLocation>
    <subcellularLocation>
        <location evidence="1">Golgi apparatus</location>
    </subcellularLocation>
    <text evidence="2">Nuclear localization may be dependent on the proteolytic cleavage of full length protein in the cytoplasm (By similarity). This cleavage may reveal an N-terminal nuclear localization signal, allowing N-terminal fragments to enter the nucleus (By similarity).</text>
</comment>
<comment type="alternative products">
    <event type="alternative splicing"/>
    <isoform>
        <id>O88196-1</id>
        <name>1</name>
        <sequence type="displayed"/>
    </isoform>
    <isoform>
        <id>O88196-2</id>
        <name>2</name>
        <sequence type="described" ref="VSP_038776"/>
    </isoform>
    <isoform>
        <id>O88196-3</id>
        <name>3</name>
        <sequence type="described" ref="VSP_038775"/>
    </isoform>
    <isoform>
        <id>O88196-4</id>
        <name>4</name>
        <sequence type="described" ref="VSP_038775 VSP_038776 VSP_038777"/>
    </isoform>
    <isoform>
        <id>O88196-5</id>
        <name>5</name>
        <sequence type="described" ref="VSP_038774"/>
    </isoform>
    <isoform>
        <id>O88196-6</id>
        <name>6</name>
        <sequence type="described" ref="VSP_038778"/>
    </isoform>
</comment>
<comment type="PTM">
    <text evidence="2">Phosphorylation on Ser-378 by Akt is required for ubiquitin ligase activity.</text>
</comment>
<comment type="PTM">
    <text evidence="2">Proteolytically cleaved into differently sized N- and C-terminal fragments.</text>
</comment>
<comment type="sequence caution" evidence="7">
    <conflict type="miscellaneous discrepancy">
        <sequence resource="EMBL-CDS" id="AAH19173"/>
    </conflict>
    <text>Contaminating sequence. Potential poly-A sequence.</text>
</comment>
<comment type="sequence caution" evidence="7">
    <conflict type="miscellaneous discrepancy">
        <sequence resource="EMBL-CDS" id="AAH57207"/>
    </conflict>
    <text>Contaminating sequence. Potential poly-A sequence.</text>
</comment>
<comment type="sequence caution" evidence="7">
    <conflict type="erroneous initiation">
        <sequence resource="EMBL-CDS" id="BAC35513"/>
    </conflict>
</comment>
<comment type="sequence caution" evidence="7">
    <conflict type="erroneous initiation">
        <sequence resource="EMBL-CDS" id="BAD90293"/>
    </conflict>
</comment>
<comment type="sequence caution" evidence="7">
    <conflict type="erroneous initiation">
        <sequence resource="EMBL-CDS" id="BAE28586"/>
    </conflict>
</comment>
<gene>
    <name type="primary">Ttc3</name>
    <name type="synonym">Kiaa4119</name>
</gene>
<proteinExistence type="evidence at protein level"/>
<protein>
    <recommendedName>
        <fullName>E3 ubiquitin-protein ligase TTC3</fullName>
        <ecNumber evidence="2">2.3.2.27</ecNumber>
    </recommendedName>
    <alternativeName>
        <fullName evidence="7">RING-type E3 ubiquitin transferase TTC3</fullName>
    </alternativeName>
    <alternativeName>
        <fullName>TPR repeat protein D</fullName>
        <shortName>Mtprd</shortName>
    </alternativeName>
</protein>
<organism>
    <name type="scientific">Mus musculus</name>
    <name type="common">Mouse</name>
    <dbReference type="NCBI Taxonomy" id="10090"/>
    <lineage>
        <taxon>Eukaryota</taxon>
        <taxon>Metazoa</taxon>
        <taxon>Chordata</taxon>
        <taxon>Craniata</taxon>
        <taxon>Vertebrata</taxon>
        <taxon>Euteleostomi</taxon>
        <taxon>Mammalia</taxon>
        <taxon>Eutheria</taxon>
        <taxon>Euarchontoglires</taxon>
        <taxon>Glires</taxon>
        <taxon>Rodentia</taxon>
        <taxon>Myomorpha</taxon>
        <taxon>Muroidea</taxon>
        <taxon>Muridae</taxon>
        <taxon>Murinae</taxon>
        <taxon>Mus</taxon>
        <taxon>Mus</taxon>
    </lineage>
</organism>
<keyword id="KW-0025">Alternative splicing</keyword>
<keyword id="KW-0963">Cytoplasm</keyword>
<keyword id="KW-0333">Golgi apparatus</keyword>
<keyword id="KW-0479">Metal-binding</keyword>
<keyword id="KW-0539">Nucleus</keyword>
<keyword id="KW-0597">Phosphoprotein</keyword>
<keyword id="KW-1185">Reference proteome</keyword>
<keyword id="KW-0677">Repeat</keyword>
<keyword id="KW-0802">TPR repeat</keyword>
<keyword id="KW-0808">Transferase</keyword>
<keyword id="KW-0833">Ubl conjugation pathway</keyword>
<keyword id="KW-0862">Zinc</keyword>
<keyword id="KW-0863">Zinc-finger</keyword>
<accession>O88196</accession>
<accession>Q05D15</accession>
<accession>Q3TMM9</accession>
<accession>Q3TPC8</accession>
<accession>Q3TPV5</accession>
<accession>Q3TQL0</accession>
<accession>Q3TSK0</accession>
<accession>Q3UFH5</accession>
<accession>Q5DTM5</accession>
<accession>Q6PG61</accession>
<accession>Q8BPM4</accession>
<accession>Q8C2N6</accession>